<feature type="chain" id="PRO_0000420473" description="Probable RNA methyltransferase At5g51130">
    <location>
        <begin position="1"/>
        <end position="318"/>
    </location>
</feature>
<feature type="domain" description="Bin3-type SAM" evidence="2">
    <location>
        <begin position="82"/>
        <end position="318"/>
    </location>
</feature>
<feature type="region of interest" description="Disordered" evidence="3">
    <location>
        <begin position="1"/>
        <end position="61"/>
    </location>
</feature>
<feature type="region of interest" description="Disordered" evidence="3">
    <location>
        <begin position="146"/>
        <end position="184"/>
    </location>
</feature>
<feature type="compositionally biased region" description="Basic and acidic residues" evidence="3">
    <location>
        <begin position="16"/>
        <end position="34"/>
    </location>
</feature>
<feature type="compositionally biased region" description="Low complexity" evidence="3">
    <location>
        <begin position="37"/>
        <end position="52"/>
    </location>
</feature>
<accession>Q6NPC9</accession>
<accession>Q9LU61</accession>
<organism>
    <name type="scientific">Arabidopsis thaliana</name>
    <name type="common">Mouse-ear cress</name>
    <dbReference type="NCBI Taxonomy" id="3702"/>
    <lineage>
        <taxon>Eukaryota</taxon>
        <taxon>Viridiplantae</taxon>
        <taxon>Streptophyta</taxon>
        <taxon>Embryophyta</taxon>
        <taxon>Tracheophyta</taxon>
        <taxon>Spermatophyta</taxon>
        <taxon>Magnoliopsida</taxon>
        <taxon>eudicotyledons</taxon>
        <taxon>Gunneridae</taxon>
        <taxon>Pentapetalae</taxon>
        <taxon>rosids</taxon>
        <taxon>malvids</taxon>
        <taxon>Brassicales</taxon>
        <taxon>Brassicaceae</taxon>
        <taxon>Camelineae</taxon>
        <taxon>Arabidopsis</taxon>
    </lineage>
</organism>
<gene>
    <name type="ordered locus">At5g51130</name>
    <name type="ORF">MWD22.7</name>
</gene>
<evidence type="ECO:0000250" key="1"/>
<evidence type="ECO:0000255" key="2">
    <source>
        <dbReference type="PROSITE-ProRule" id="PRU00848"/>
    </source>
</evidence>
<evidence type="ECO:0000256" key="3">
    <source>
        <dbReference type="SAM" id="MobiDB-lite"/>
    </source>
</evidence>
<evidence type="ECO:0000305" key="4"/>
<reference key="1">
    <citation type="journal article" date="2000" name="DNA Res.">
        <title>Structural analysis of Arabidopsis thaliana chromosome 5. X. Sequence features of the regions of 3,076,755 bp covered by sixty P1 and TAC clones.</title>
        <authorList>
            <person name="Sato S."/>
            <person name="Nakamura Y."/>
            <person name="Kaneko T."/>
            <person name="Katoh T."/>
            <person name="Asamizu E."/>
            <person name="Kotani H."/>
            <person name="Tabata S."/>
        </authorList>
    </citation>
    <scope>NUCLEOTIDE SEQUENCE [LARGE SCALE GENOMIC DNA]</scope>
    <source>
        <strain>cv. Columbia</strain>
    </source>
</reference>
<reference key="2">
    <citation type="journal article" date="2017" name="Plant J.">
        <title>Araport11: a complete reannotation of the Arabidopsis thaliana reference genome.</title>
        <authorList>
            <person name="Cheng C.Y."/>
            <person name="Krishnakumar V."/>
            <person name="Chan A.P."/>
            <person name="Thibaud-Nissen F."/>
            <person name="Schobel S."/>
            <person name="Town C.D."/>
        </authorList>
    </citation>
    <scope>GENOME REANNOTATION</scope>
    <source>
        <strain>cv. Columbia</strain>
    </source>
</reference>
<reference key="3">
    <citation type="submission" date="2003-11" db="EMBL/GenBank/DDBJ databases">
        <title>Arabidopsis cDNA clones.</title>
        <authorList>
            <person name="Cheuk R."/>
            <person name="Chen H."/>
            <person name="Kim C.J."/>
            <person name="Shinn P."/>
            <person name="Ecker J.R."/>
        </authorList>
    </citation>
    <scope>NUCLEOTIDE SEQUENCE [LARGE SCALE MRNA]</scope>
</reference>
<reference key="4">
    <citation type="submission" date="2003-12" db="EMBL/GenBank/DDBJ databases">
        <title>Arabidopsis ORF clones.</title>
        <authorList>
            <person name="Shinn P."/>
            <person name="Chen H."/>
            <person name="Cheuk R."/>
            <person name="Kim C.J."/>
            <person name="Ecker J.R."/>
        </authorList>
    </citation>
    <scope>NUCLEOTIDE SEQUENCE [LARGE SCALE MRNA]</scope>
</reference>
<comment type="function">
    <text evidence="1">Probable RNA methyltransferase.</text>
</comment>
<comment type="similarity">
    <text evidence="4">Belongs to the methyltransferase superfamily.</text>
</comment>
<comment type="sequence caution" evidence="4">
    <conflict type="erroneous gene model prediction">
        <sequence resource="EMBL-CDS" id="BAA97375"/>
    </conflict>
</comment>
<dbReference type="EC" id="2.1.1.-"/>
<dbReference type="EMBL" id="AB023044">
    <property type="protein sequence ID" value="BAA97375.1"/>
    <property type="status" value="ALT_SEQ"/>
    <property type="molecule type" value="Genomic_DNA"/>
</dbReference>
<dbReference type="EMBL" id="CP002688">
    <property type="protein sequence ID" value="AED96041.1"/>
    <property type="molecule type" value="Genomic_DNA"/>
</dbReference>
<dbReference type="EMBL" id="BT010868">
    <property type="protein sequence ID" value="AAR24235.1"/>
    <property type="molecule type" value="mRNA"/>
</dbReference>
<dbReference type="EMBL" id="BT010996">
    <property type="protein sequence ID" value="AAR24774.1"/>
    <property type="molecule type" value="mRNA"/>
</dbReference>
<dbReference type="RefSeq" id="NP_568752.1">
    <property type="nucleotide sequence ID" value="NM_124492.3"/>
</dbReference>
<dbReference type="SMR" id="Q6NPC9"/>
<dbReference type="FunCoup" id="Q6NPC9">
    <property type="interactions" value="1786"/>
</dbReference>
<dbReference type="STRING" id="3702.Q6NPC9"/>
<dbReference type="PaxDb" id="3702-AT5G51130.1"/>
<dbReference type="ProteomicsDB" id="240667"/>
<dbReference type="EnsemblPlants" id="AT5G51130.1">
    <property type="protein sequence ID" value="AT5G51130.1"/>
    <property type="gene ID" value="AT5G51130"/>
</dbReference>
<dbReference type="GeneID" id="835187"/>
<dbReference type="Gramene" id="AT5G51130.1">
    <property type="protein sequence ID" value="AT5G51130.1"/>
    <property type="gene ID" value="AT5G51130"/>
</dbReference>
<dbReference type="KEGG" id="ath:AT5G51130"/>
<dbReference type="Araport" id="AT5G51130"/>
<dbReference type="TAIR" id="AT5G51130"/>
<dbReference type="eggNOG" id="KOG2899">
    <property type="taxonomic scope" value="Eukaryota"/>
</dbReference>
<dbReference type="HOGENOM" id="CLU_004729_2_0_1"/>
<dbReference type="InParanoid" id="Q6NPC9"/>
<dbReference type="OMA" id="KWIHLFH"/>
<dbReference type="OrthoDB" id="10017101at2759"/>
<dbReference type="PRO" id="PR:Q6NPC9"/>
<dbReference type="Proteomes" id="UP000006548">
    <property type="component" value="Chromosome 5"/>
</dbReference>
<dbReference type="ExpressionAtlas" id="Q6NPC9">
    <property type="expression patterns" value="baseline and differential"/>
</dbReference>
<dbReference type="GO" id="GO:0008168">
    <property type="term" value="F:methyltransferase activity"/>
    <property type="evidence" value="ECO:0007669"/>
    <property type="project" value="UniProtKB-KW"/>
</dbReference>
<dbReference type="GO" id="GO:0032259">
    <property type="term" value="P:methylation"/>
    <property type="evidence" value="ECO:0007669"/>
    <property type="project" value="UniProtKB-KW"/>
</dbReference>
<dbReference type="CDD" id="cd02440">
    <property type="entry name" value="AdoMet_MTases"/>
    <property type="match status" value="1"/>
</dbReference>
<dbReference type="Gene3D" id="3.40.50.150">
    <property type="entry name" value="Vaccinia Virus protein VP39"/>
    <property type="match status" value="1"/>
</dbReference>
<dbReference type="InterPro" id="IPR039772">
    <property type="entry name" value="Bin3-like"/>
</dbReference>
<dbReference type="InterPro" id="IPR010675">
    <property type="entry name" value="Bin3_C"/>
</dbReference>
<dbReference type="InterPro" id="IPR024160">
    <property type="entry name" value="BIN3_SAM-bd_dom"/>
</dbReference>
<dbReference type="InterPro" id="IPR029063">
    <property type="entry name" value="SAM-dependent_MTases_sf"/>
</dbReference>
<dbReference type="PANTHER" id="PTHR12315:SF0">
    <property type="entry name" value="7SK SNRNA METHYLPHOSPHATE CAPPING ENZYME"/>
    <property type="match status" value="1"/>
</dbReference>
<dbReference type="PANTHER" id="PTHR12315">
    <property type="entry name" value="BICOID-INTERACTING PROTEIN RELATED"/>
    <property type="match status" value="1"/>
</dbReference>
<dbReference type="Pfam" id="PF06859">
    <property type="entry name" value="Bin3"/>
    <property type="match status" value="1"/>
</dbReference>
<dbReference type="Pfam" id="PF06325">
    <property type="entry name" value="PrmA"/>
    <property type="match status" value="1"/>
</dbReference>
<dbReference type="SUPFAM" id="SSF53335">
    <property type="entry name" value="S-adenosyl-L-methionine-dependent methyltransferases"/>
    <property type="match status" value="1"/>
</dbReference>
<dbReference type="PROSITE" id="PS51515">
    <property type="entry name" value="BIN3_SAM"/>
    <property type="match status" value="1"/>
</dbReference>
<proteinExistence type="evidence at transcript level"/>
<keyword id="KW-0489">Methyltransferase</keyword>
<keyword id="KW-1185">Reference proteome</keyword>
<keyword id="KW-0949">S-adenosyl-L-methionine</keyword>
<keyword id="KW-0808">Transferase</keyword>
<name>BIN3D_ARATH</name>
<sequence length="318" mass="36597">MGRDNDQKKNKKKRNRSNENEKSVEKVVANEEKVPTQQKQKQQQGQQGNCNQSKKKKNQEVYPFGNYRNYYGYRISNDTDEDPRLKVLKKEWFEGKDCLDIGCNSGIMTIHIAKKFGCRSILGVDIDTSRIEDAHWHLRKFVRMQNSTKPSEKKSSSEGADGVHGSKEPSVSLSNGEAKADSAETKDLSQIVSFQKENFVQTRNLDDNRYDTILCLSVTKWVHLNWGDDGLITLFSKIWRLLQPGGIFVMEPQPWKSYENNRRVSETTAMNYRTIVLRPDRFQEILLDKIGFRTVEDLTSSLSGASKGFDRQILAFQK</sequence>
<protein>
    <recommendedName>
        <fullName>Probable RNA methyltransferase At5g51130</fullName>
        <ecNumber>2.1.1.-</ecNumber>
    </recommendedName>
</protein>